<evidence type="ECO:0000255" key="1">
    <source>
        <dbReference type="HAMAP-Rule" id="MF_01416"/>
    </source>
</evidence>
<organism>
    <name type="scientific">Synechococcus sp. (strain JA-2-3B'a(2-13))</name>
    <name type="common">Cyanobacteria bacterium Yellowstone B-Prime</name>
    <dbReference type="NCBI Taxonomy" id="321332"/>
    <lineage>
        <taxon>Bacteria</taxon>
        <taxon>Bacillati</taxon>
        <taxon>Cyanobacteriota</taxon>
        <taxon>Cyanophyceae</taxon>
        <taxon>Synechococcales</taxon>
        <taxon>Synechococcaceae</taxon>
        <taxon>Synechococcus</taxon>
    </lineage>
</organism>
<accession>Q2JIF9</accession>
<feature type="chain" id="PRO_0000371178" description="ATP synthase subunit delta">
    <location>
        <begin position="1"/>
        <end position="182"/>
    </location>
</feature>
<comment type="function">
    <text evidence="1">F(1)F(0) ATP synthase produces ATP from ADP in the presence of a proton or sodium gradient. F-type ATPases consist of two structural domains, F(1) containing the extramembraneous catalytic core and F(0) containing the membrane proton channel, linked together by a central stalk and a peripheral stalk. During catalysis, ATP synthesis in the catalytic domain of F(1) is coupled via a rotary mechanism of the central stalk subunits to proton translocation.</text>
</comment>
<comment type="function">
    <text evidence="1">This protein is part of the stalk that links CF(0) to CF(1). It either transmits conformational changes from CF(0) to CF(1) or is implicated in proton conduction.</text>
</comment>
<comment type="subunit">
    <text evidence="1">F-type ATPases have 2 components, F(1) - the catalytic core - and F(0) - the membrane proton channel. F(1) has five subunits: alpha(3), beta(3), gamma(1), delta(1), epsilon(1). CF(0) has four main subunits: a(1), b(1), b'(1) and c(10-14). The alpha and beta chains form an alternating ring which encloses part of the gamma chain. F(1) is attached to F(0) by a central stalk formed by the gamma and epsilon chains, while a peripheral stalk is formed by the delta, b and b' chains.</text>
</comment>
<comment type="subcellular location">
    <subcellularLocation>
        <location evidence="1">Cellular thylakoid membrane</location>
        <topology evidence="1">Peripheral membrane protein</topology>
    </subcellularLocation>
</comment>
<comment type="similarity">
    <text evidence="1">Belongs to the ATPase delta chain family.</text>
</comment>
<reference key="1">
    <citation type="journal article" date="2007" name="ISME J.">
        <title>Population level functional diversity in a microbial community revealed by comparative genomic and metagenomic analyses.</title>
        <authorList>
            <person name="Bhaya D."/>
            <person name="Grossman A.R."/>
            <person name="Steunou A.-S."/>
            <person name="Khuri N."/>
            <person name="Cohan F.M."/>
            <person name="Hamamura N."/>
            <person name="Melendrez M.C."/>
            <person name="Bateson M.M."/>
            <person name="Ward D.M."/>
            <person name="Heidelberg J.F."/>
        </authorList>
    </citation>
    <scope>NUCLEOTIDE SEQUENCE [LARGE SCALE GENOMIC DNA]</scope>
    <source>
        <strain>JA-2-3B'a(2-13)</strain>
    </source>
</reference>
<proteinExistence type="inferred from homology"/>
<name>ATPD_SYNJB</name>
<dbReference type="EMBL" id="CP000240">
    <property type="protein sequence ID" value="ABD03600.1"/>
    <property type="molecule type" value="Genomic_DNA"/>
</dbReference>
<dbReference type="RefSeq" id="WP_011434219.1">
    <property type="nucleotide sequence ID" value="NC_007776.1"/>
</dbReference>
<dbReference type="SMR" id="Q2JIF9"/>
<dbReference type="STRING" id="321332.CYB_2674"/>
<dbReference type="KEGG" id="cyb:CYB_2674"/>
<dbReference type="eggNOG" id="COG0712">
    <property type="taxonomic scope" value="Bacteria"/>
</dbReference>
<dbReference type="HOGENOM" id="CLU_085114_4_0_3"/>
<dbReference type="OrthoDB" id="9802471at2"/>
<dbReference type="Proteomes" id="UP000001938">
    <property type="component" value="Chromosome"/>
</dbReference>
<dbReference type="GO" id="GO:0031676">
    <property type="term" value="C:plasma membrane-derived thylakoid membrane"/>
    <property type="evidence" value="ECO:0007669"/>
    <property type="project" value="UniProtKB-SubCell"/>
</dbReference>
<dbReference type="GO" id="GO:0045259">
    <property type="term" value="C:proton-transporting ATP synthase complex"/>
    <property type="evidence" value="ECO:0007669"/>
    <property type="project" value="UniProtKB-KW"/>
</dbReference>
<dbReference type="GO" id="GO:0046933">
    <property type="term" value="F:proton-transporting ATP synthase activity, rotational mechanism"/>
    <property type="evidence" value="ECO:0007669"/>
    <property type="project" value="UniProtKB-UniRule"/>
</dbReference>
<dbReference type="Gene3D" id="1.10.520.20">
    <property type="entry name" value="N-terminal domain of the delta subunit of the F1F0-ATP synthase"/>
    <property type="match status" value="1"/>
</dbReference>
<dbReference type="HAMAP" id="MF_01416">
    <property type="entry name" value="ATP_synth_delta_bact"/>
    <property type="match status" value="1"/>
</dbReference>
<dbReference type="InterPro" id="IPR026015">
    <property type="entry name" value="ATP_synth_OSCP/delta_N_sf"/>
</dbReference>
<dbReference type="InterPro" id="IPR000711">
    <property type="entry name" value="ATPase_OSCP/dsu"/>
</dbReference>
<dbReference type="NCBIfam" id="TIGR01145">
    <property type="entry name" value="ATP_synt_delta"/>
    <property type="match status" value="1"/>
</dbReference>
<dbReference type="PANTHER" id="PTHR11910">
    <property type="entry name" value="ATP SYNTHASE DELTA CHAIN"/>
    <property type="match status" value="1"/>
</dbReference>
<dbReference type="Pfam" id="PF00213">
    <property type="entry name" value="OSCP"/>
    <property type="match status" value="1"/>
</dbReference>
<dbReference type="PRINTS" id="PR00125">
    <property type="entry name" value="ATPASEDELTA"/>
</dbReference>
<dbReference type="SUPFAM" id="SSF47928">
    <property type="entry name" value="N-terminal domain of the delta subunit of the F1F0-ATP synthase"/>
    <property type="match status" value="1"/>
</dbReference>
<protein>
    <recommendedName>
        <fullName evidence="1">ATP synthase subunit delta</fullName>
    </recommendedName>
    <alternativeName>
        <fullName evidence="1">ATP synthase F(1) sector subunit delta</fullName>
    </alternativeName>
    <alternativeName>
        <fullName evidence="1">F-type ATPase subunit delta</fullName>
        <shortName evidence="1">F-ATPase subunit delta</shortName>
    </alternativeName>
</protein>
<keyword id="KW-0066">ATP synthesis</keyword>
<keyword id="KW-0139">CF(1)</keyword>
<keyword id="KW-0375">Hydrogen ion transport</keyword>
<keyword id="KW-0406">Ion transport</keyword>
<keyword id="KW-0472">Membrane</keyword>
<keyword id="KW-1185">Reference proteome</keyword>
<keyword id="KW-0793">Thylakoid</keyword>
<keyword id="KW-0813">Transport</keyword>
<gene>
    <name evidence="1" type="primary">atpH</name>
    <name evidence="1" type="synonym">atpD</name>
    <name type="ordered locus">CYB_2674</name>
</gene>
<sequence length="182" mass="20106">MISSTMAEKVVDPYAEALIALGSGQGLLDTFAADMRFIAEVLRATPELGQFLANPVIKAEAKKNLLQQVFADQIHPLLLNALKLLTDRRRIMFLGTVCRRFLDLQRKLQNIVLAEVTTAIPLTEAQQQSIRERVMDFTQASGVELQATQDPELLGGVVIKIGSQVIDLSLRGQLRRLALQLA</sequence>